<feature type="chain" id="PRO_1000141766" description="DNA-directed RNA polymerase subunit beta'">
    <location>
        <begin position="1"/>
        <end position="1323"/>
    </location>
</feature>
<feature type="binding site" evidence="1">
    <location>
        <position position="60"/>
    </location>
    <ligand>
        <name>Zn(2+)</name>
        <dbReference type="ChEBI" id="CHEBI:29105"/>
        <label>1</label>
    </ligand>
</feature>
<feature type="binding site" evidence="1">
    <location>
        <position position="62"/>
    </location>
    <ligand>
        <name>Zn(2+)</name>
        <dbReference type="ChEBI" id="CHEBI:29105"/>
        <label>1</label>
    </ligand>
</feature>
<feature type="binding site" evidence="1">
    <location>
        <position position="75"/>
    </location>
    <ligand>
        <name>Zn(2+)</name>
        <dbReference type="ChEBI" id="CHEBI:29105"/>
        <label>1</label>
    </ligand>
</feature>
<feature type="binding site" evidence="1">
    <location>
        <position position="78"/>
    </location>
    <ligand>
        <name>Zn(2+)</name>
        <dbReference type="ChEBI" id="CHEBI:29105"/>
        <label>1</label>
    </ligand>
</feature>
<feature type="binding site" evidence="1">
    <location>
        <position position="535"/>
    </location>
    <ligand>
        <name>Mg(2+)</name>
        <dbReference type="ChEBI" id="CHEBI:18420"/>
    </ligand>
</feature>
<feature type="binding site" evidence="1">
    <location>
        <position position="537"/>
    </location>
    <ligand>
        <name>Mg(2+)</name>
        <dbReference type="ChEBI" id="CHEBI:18420"/>
    </ligand>
</feature>
<feature type="binding site" evidence="1">
    <location>
        <position position="539"/>
    </location>
    <ligand>
        <name>Mg(2+)</name>
        <dbReference type="ChEBI" id="CHEBI:18420"/>
    </ligand>
</feature>
<feature type="binding site" evidence="1">
    <location>
        <position position="894"/>
    </location>
    <ligand>
        <name>Zn(2+)</name>
        <dbReference type="ChEBI" id="CHEBI:29105"/>
        <label>2</label>
    </ligand>
</feature>
<feature type="binding site" evidence="1">
    <location>
        <position position="977"/>
    </location>
    <ligand>
        <name>Zn(2+)</name>
        <dbReference type="ChEBI" id="CHEBI:29105"/>
        <label>2</label>
    </ligand>
</feature>
<feature type="binding site" evidence="1">
    <location>
        <position position="984"/>
    </location>
    <ligand>
        <name>Zn(2+)</name>
        <dbReference type="ChEBI" id="CHEBI:29105"/>
        <label>2</label>
    </ligand>
</feature>
<feature type="binding site" evidence="1">
    <location>
        <position position="987"/>
    </location>
    <ligand>
        <name>Zn(2+)</name>
        <dbReference type="ChEBI" id="CHEBI:29105"/>
        <label>2</label>
    </ligand>
</feature>
<organism>
    <name type="scientific">Corynebacterium urealyticum (strain ATCC 43042 / DSM 7109)</name>
    <dbReference type="NCBI Taxonomy" id="504474"/>
    <lineage>
        <taxon>Bacteria</taxon>
        <taxon>Bacillati</taxon>
        <taxon>Actinomycetota</taxon>
        <taxon>Actinomycetes</taxon>
        <taxon>Mycobacteriales</taxon>
        <taxon>Corynebacteriaceae</taxon>
        <taxon>Corynebacterium</taxon>
    </lineage>
</organism>
<dbReference type="EC" id="2.7.7.6" evidence="1"/>
<dbReference type="EMBL" id="AM942444">
    <property type="protein sequence ID" value="CAQ04261.1"/>
    <property type="molecule type" value="Genomic_DNA"/>
</dbReference>
<dbReference type="RefSeq" id="WP_012359562.1">
    <property type="nucleotide sequence ID" value="NC_010545.1"/>
</dbReference>
<dbReference type="SMR" id="B1VES2"/>
<dbReference type="STRING" id="504474.cu0301"/>
<dbReference type="GeneID" id="60605104"/>
<dbReference type="KEGG" id="cur:cu0301"/>
<dbReference type="eggNOG" id="COG0086">
    <property type="taxonomic scope" value="Bacteria"/>
</dbReference>
<dbReference type="HOGENOM" id="CLU_000524_3_1_11"/>
<dbReference type="Proteomes" id="UP000001727">
    <property type="component" value="Chromosome"/>
</dbReference>
<dbReference type="GO" id="GO:0000428">
    <property type="term" value="C:DNA-directed RNA polymerase complex"/>
    <property type="evidence" value="ECO:0007669"/>
    <property type="project" value="UniProtKB-KW"/>
</dbReference>
<dbReference type="GO" id="GO:0003677">
    <property type="term" value="F:DNA binding"/>
    <property type="evidence" value="ECO:0007669"/>
    <property type="project" value="UniProtKB-UniRule"/>
</dbReference>
<dbReference type="GO" id="GO:0003899">
    <property type="term" value="F:DNA-directed RNA polymerase activity"/>
    <property type="evidence" value="ECO:0007669"/>
    <property type="project" value="UniProtKB-UniRule"/>
</dbReference>
<dbReference type="GO" id="GO:0000287">
    <property type="term" value="F:magnesium ion binding"/>
    <property type="evidence" value="ECO:0007669"/>
    <property type="project" value="UniProtKB-UniRule"/>
</dbReference>
<dbReference type="GO" id="GO:0008270">
    <property type="term" value="F:zinc ion binding"/>
    <property type="evidence" value="ECO:0007669"/>
    <property type="project" value="UniProtKB-UniRule"/>
</dbReference>
<dbReference type="GO" id="GO:0006351">
    <property type="term" value="P:DNA-templated transcription"/>
    <property type="evidence" value="ECO:0007669"/>
    <property type="project" value="UniProtKB-UniRule"/>
</dbReference>
<dbReference type="CDD" id="cd02655">
    <property type="entry name" value="RNAP_beta'_C"/>
    <property type="match status" value="1"/>
</dbReference>
<dbReference type="CDD" id="cd01609">
    <property type="entry name" value="RNAP_beta'_N"/>
    <property type="match status" value="1"/>
</dbReference>
<dbReference type="FunFam" id="1.10.150.390:FF:000002">
    <property type="entry name" value="DNA-directed RNA polymerase subunit beta"/>
    <property type="match status" value="1"/>
</dbReference>
<dbReference type="FunFam" id="1.10.40.90:FF:000001">
    <property type="entry name" value="DNA-directed RNA polymerase subunit beta"/>
    <property type="match status" value="1"/>
</dbReference>
<dbReference type="FunFam" id="4.10.860.120:FF:000001">
    <property type="entry name" value="DNA-directed RNA polymerase subunit beta"/>
    <property type="match status" value="1"/>
</dbReference>
<dbReference type="Gene3D" id="1.10.132.30">
    <property type="match status" value="1"/>
</dbReference>
<dbReference type="Gene3D" id="1.10.150.390">
    <property type="match status" value="1"/>
</dbReference>
<dbReference type="Gene3D" id="1.10.1790.20">
    <property type="match status" value="1"/>
</dbReference>
<dbReference type="Gene3D" id="1.10.40.90">
    <property type="match status" value="1"/>
</dbReference>
<dbReference type="Gene3D" id="2.40.40.20">
    <property type="match status" value="1"/>
</dbReference>
<dbReference type="Gene3D" id="2.40.50.100">
    <property type="match status" value="1"/>
</dbReference>
<dbReference type="Gene3D" id="4.10.860.120">
    <property type="entry name" value="RNA polymerase II, clamp domain"/>
    <property type="match status" value="1"/>
</dbReference>
<dbReference type="Gene3D" id="1.10.274.100">
    <property type="entry name" value="RNA polymerase Rpb1, domain 3"/>
    <property type="match status" value="1"/>
</dbReference>
<dbReference type="HAMAP" id="MF_01322">
    <property type="entry name" value="RNApol_bact_RpoC"/>
    <property type="match status" value="1"/>
</dbReference>
<dbReference type="InterPro" id="IPR045867">
    <property type="entry name" value="DNA-dir_RpoC_beta_prime"/>
</dbReference>
<dbReference type="InterPro" id="IPR012754">
    <property type="entry name" value="DNA-dir_RpoC_beta_prime_bact"/>
</dbReference>
<dbReference type="InterPro" id="IPR000722">
    <property type="entry name" value="RNA_pol_asu"/>
</dbReference>
<dbReference type="InterPro" id="IPR006592">
    <property type="entry name" value="RNA_pol_N"/>
</dbReference>
<dbReference type="InterPro" id="IPR007080">
    <property type="entry name" value="RNA_pol_Rpb1_1"/>
</dbReference>
<dbReference type="InterPro" id="IPR007066">
    <property type="entry name" value="RNA_pol_Rpb1_3"/>
</dbReference>
<dbReference type="InterPro" id="IPR042102">
    <property type="entry name" value="RNA_pol_Rpb1_3_sf"/>
</dbReference>
<dbReference type="InterPro" id="IPR007083">
    <property type="entry name" value="RNA_pol_Rpb1_4"/>
</dbReference>
<dbReference type="InterPro" id="IPR007081">
    <property type="entry name" value="RNA_pol_Rpb1_5"/>
</dbReference>
<dbReference type="InterPro" id="IPR044893">
    <property type="entry name" value="RNA_pol_Rpb1_clamp_domain"/>
</dbReference>
<dbReference type="InterPro" id="IPR038120">
    <property type="entry name" value="Rpb1_funnel_sf"/>
</dbReference>
<dbReference type="NCBIfam" id="NF011498">
    <property type="entry name" value="PRK14906.1"/>
    <property type="match status" value="1"/>
</dbReference>
<dbReference type="NCBIfam" id="TIGR02386">
    <property type="entry name" value="rpoC_TIGR"/>
    <property type="match status" value="1"/>
</dbReference>
<dbReference type="PANTHER" id="PTHR19376">
    <property type="entry name" value="DNA-DIRECTED RNA POLYMERASE"/>
    <property type="match status" value="1"/>
</dbReference>
<dbReference type="PANTHER" id="PTHR19376:SF54">
    <property type="entry name" value="DNA-DIRECTED RNA POLYMERASE SUBUNIT BETA"/>
    <property type="match status" value="1"/>
</dbReference>
<dbReference type="Pfam" id="PF04997">
    <property type="entry name" value="RNA_pol_Rpb1_1"/>
    <property type="match status" value="1"/>
</dbReference>
<dbReference type="Pfam" id="PF00623">
    <property type="entry name" value="RNA_pol_Rpb1_2"/>
    <property type="match status" value="2"/>
</dbReference>
<dbReference type="Pfam" id="PF04983">
    <property type="entry name" value="RNA_pol_Rpb1_3"/>
    <property type="match status" value="1"/>
</dbReference>
<dbReference type="Pfam" id="PF05000">
    <property type="entry name" value="RNA_pol_Rpb1_4"/>
    <property type="match status" value="1"/>
</dbReference>
<dbReference type="Pfam" id="PF04998">
    <property type="entry name" value="RNA_pol_Rpb1_5"/>
    <property type="match status" value="1"/>
</dbReference>
<dbReference type="SMART" id="SM00663">
    <property type="entry name" value="RPOLA_N"/>
    <property type="match status" value="1"/>
</dbReference>
<dbReference type="SUPFAM" id="SSF64484">
    <property type="entry name" value="beta and beta-prime subunits of DNA dependent RNA-polymerase"/>
    <property type="match status" value="1"/>
</dbReference>
<sequence>MLDVNFFDELRIGLATADDIRRWSRGEVKKPETINYRTLKPEKDGLFCERIFGPTRDWECSCGKYKRVRYKGIICERCGVEVTKSKVRRERMGHIELAAPVTHIWYFKGVPSRLGYLLDLAPKDLEKIIYFAANIITSVDEDARHSDQTTLEAEMLLEKKEVEQDRDADLADRAKTLEEDLAELEAAGAKADAKKKVQNAADREMRHIRERAEREVERLDEIWNTFVKLAPKQMIADETLYEELLDRYEDYFTGGMGAEAIQTLIRNFDLEAEAESLREVIRDGKGQRKLRALKRLKVVAAFLRSGNDPAGMVLDCIPVIPPELRPMVQLDGGRFATSDLNDLYRRVINRNNRLKRMLDLGAPEIIVNNEKRMLQESVDALFDNGRRGRPVTGPGNRPLKSLSDLLKGKQGRFRQNLLGKRVDYSGRSVIIVGPQLKLHQCGLPKLMALELFKPFVMKRLVEKSYAQNIKSAKRMVERQRPEVWDVLEEAIAEHPVMLNRAPTLHRLGIQAFEPVLIEGKAIQLHPLACEAFNADFDGDQMAVHLPLSDEAQAEARILMLASNNILSPASGKPLAMPRLDMVTGLYYLTLIKGKEEFGGQGAFTEATEQGPATGVYTSLAEAIMAYDRGVLGLQAPIHVRIDHLRPPAEVEAEQFPDGWQKGQTWTAETTLGRVQFNELLPWNYPYVEGVMDKKNQAVVINDLAAKYPMITVAQTVDKLKDAGFYWATRSGVTITMHDVLVLPNKQEILDEYEAKAQRIEKKLARGKINESERYQSLVDLWKEATDFVGESVEKLYPDDNPIPMIVKSGAAGNMRQIWTLAGMKGMVTNSRGDYITRPVKTSFREGLSVLEYFNNSHGSRKGLADTALRTADSGYLTRRLVDVAQDVIVREDDCGTKQGVVLDVCTPVLDANGEKTGEFARADFVETSVLGRFLAADAIGANGEVVCEAGTVIGELELAELVKAGVETIKARSVMTCGTATGVCSTCYGKSMATGKKVEIGEAVGIVAAQSIGEPGTQLTMRTFHLGGVGGDITGGLPRVQELFEARVPKAKSPIASVDGKIKIEDDDAFFTLTIIPDDGSEEVVYEKLSKRQGLATLGTGGVERPLRDGDHVKMGQQLLKGAADPHEVLRVMGRRGVQQHLINEVQKVYRDQGVAIHDKHIEIIVRQMLRRVTVIDSGSTEYLPGSLVDHSDAVAASKEAVKTGGRPVEVRAEIMGITKASLATESWLSAASFQETTRVLTDAAINKRSDKLIGLKENVIIGKLIPAGTGIARYRNIQVQPTEEARAAAFTLPSTFGDGFYGDEGYGEFTGASVPLDDLGLH</sequence>
<reference key="1">
    <citation type="journal article" date="2008" name="J. Biotechnol.">
        <title>The lifestyle of Corynebacterium urealyticum derived from its complete genome sequence established by pyrosequencing.</title>
        <authorList>
            <person name="Tauch A."/>
            <person name="Trost E."/>
            <person name="Tilker A."/>
            <person name="Ludewig U."/>
            <person name="Schneiker S."/>
            <person name="Goesmann A."/>
            <person name="Arnold W."/>
            <person name="Bekel T."/>
            <person name="Brinkrolf K."/>
            <person name="Brune I."/>
            <person name="Goetker S."/>
            <person name="Kalinowski J."/>
            <person name="Kamp P.-B."/>
            <person name="Lobo F.P."/>
            <person name="Viehoever P."/>
            <person name="Weisshaar B."/>
            <person name="Soriano F."/>
            <person name="Droege M."/>
            <person name="Puehler A."/>
        </authorList>
    </citation>
    <scope>NUCLEOTIDE SEQUENCE [LARGE SCALE GENOMIC DNA]</scope>
    <source>
        <strain>ATCC 43042 / DSM 7109</strain>
    </source>
</reference>
<accession>B1VES2</accession>
<gene>
    <name evidence="1" type="primary">rpoC</name>
    <name type="ordered locus">cu0301</name>
</gene>
<comment type="function">
    <text evidence="1">DNA-dependent RNA polymerase catalyzes the transcription of DNA into RNA using the four ribonucleoside triphosphates as substrates.</text>
</comment>
<comment type="catalytic activity">
    <reaction evidence="1">
        <text>RNA(n) + a ribonucleoside 5'-triphosphate = RNA(n+1) + diphosphate</text>
        <dbReference type="Rhea" id="RHEA:21248"/>
        <dbReference type="Rhea" id="RHEA-COMP:14527"/>
        <dbReference type="Rhea" id="RHEA-COMP:17342"/>
        <dbReference type="ChEBI" id="CHEBI:33019"/>
        <dbReference type="ChEBI" id="CHEBI:61557"/>
        <dbReference type="ChEBI" id="CHEBI:140395"/>
        <dbReference type="EC" id="2.7.7.6"/>
    </reaction>
</comment>
<comment type="cofactor">
    <cofactor evidence="1">
        <name>Mg(2+)</name>
        <dbReference type="ChEBI" id="CHEBI:18420"/>
    </cofactor>
    <text evidence="1">Binds 1 Mg(2+) ion per subunit.</text>
</comment>
<comment type="cofactor">
    <cofactor evidence="1">
        <name>Zn(2+)</name>
        <dbReference type="ChEBI" id="CHEBI:29105"/>
    </cofactor>
    <text evidence="1">Binds 2 Zn(2+) ions per subunit.</text>
</comment>
<comment type="subunit">
    <text evidence="1">The RNAP catalytic core consists of 2 alpha, 1 beta, 1 beta' and 1 omega subunit. When a sigma factor is associated with the core the holoenzyme is formed, which can initiate transcription.</text>
</comment>
<comment type="similarity">
    <text evidence="1">Belongs to the RNA polymerase beta' chain family.</text>
</comment>
<name>RPOC_CORU7</name>
<keyword id="KW-0240">DNA-directed RNA polymerase</keyword>
<keyword id="KW-0460">Magnesium</keyword>
<keyword id="KW-0479">Metal-binding</keyword>
<keyword id="KW-0548">Nucleotidyltransferase</keyword>
<keyword id="KW-1185">Reference proteome</keyword>
<keyword id="KW-0804">Transcription</keyword>
<keyword id="KW-0808">Transferase</keyword>
<keyword id="KW-0862">Zinc</keyword>
<protein>
    <recommendedName>
        <fullName evidence="1">DNA-directed RNA polymerase subunit beta'</fullName>
        <shortName evidence="1">RNAP subunit beta'</shortName>
        <ecNumber evidence="1">2.7.7.6</ecNumber>
    </recommendedName>
    <alternativeName>
        <fullName evidence="1">RNA polymerase subunit beta'</fullName>
    </alternativeName>
    <alternativeName>
        <fullName evidence="1">Transcriptase subunit beta'</fullName>
    </alternativeName>
</protein>
<proteinExistence type="inferred from homology"/>
<evidence type="ECO:0000255" key="1">
    <source>
        <dbReference type="HAMAP-Rule" id="MF_01322"/>
    </source>
</evidence>